<dbReference type="EMBL" id="AJ003818">
    <property type="protein sequence ID" value="CAA06032.1"/>
    <property type="molecule type" value="mRNA"/>
</dbReference>
<dbReference type="EMBL" id="CU329671">
    <property type="protein sequence ID" value="CAA22682.1"/>
    <property type="molecule type" value="Genomic_DNA"/>
</dbReference>
<dbReference type="PIR" id="T39965">
    <property type="entry name" value="T39965"/>
</dbReference>
<dbReference type="RefSeq" id="NP_595955.1">
    <property type="nucleotide sequence ID" value="NM_001021864.2"/>
</dbReference>
<dbReference type="SMR" id="O14399"/>
<dbReference type="BioGRID" id="276666">
    <property type="interactions" value="13"/>
</dbReference>
<dbReference type="FunCoup" id="O14399">
    <property type="interactions" value="674"/>
</dbReference>
<dbReference type="IntAct" id="O14399">
    <property type="interactions" value="2"/>
</dbReference>
<dbReference type="STRING" id="284812.O14399"/>
<dbReference type="iPTMnet" id="O14399"/>
<dbReference type="PaxDb" id="4896-SPBC12D12.08c.1"/>
<dbReference type="EnsemblFungi" id="SPBC12D12.08c.1">
    <property type="protein sequence ID" value="SPBC12D12.08c.1:pep"/>
    <property type="gene ID" value="SPBC12D12.08c"/>
</dbReference>
<dbReference type="GeneID" id="2540129"/>
<dbReference type="KEGG" id="spo:2540129"/>
<dbReference type="PomBase" id="SPBC12D12.08c"/>
<dbReference type="VEuPathDB" id="FungiDB:SPBC12D12.08c"/>
<dbReference type="eggNOG" id="KOG0005">
    <property type="taxonomic scope" value="Eukaryota"/>
</dbReference>
<dbReference type="HOGENOM" id="CLU_010412_6_4_1"/>
<dbReference type="InParanoid" id="O14399"/>
<dbReference type="OMA" id="YAGKQMA"/>
<dbReference type="PhylomeDB" id="O14399"/>
<dbReference type="Reactome" id="R-SPO-5689603">
    <property type="pathway name" value="UCH proteinases"/>
</dbReference>
<dbReference type="Reactome" id="R-SPO-8856825">
    <property type="pathway name" value="Cargo recognition for clathrin-mediated endocytosis"/>
</dbReference>
<dbReference type="Reactome" id="R-SPO-8951664">
    <property type="pathway name" value="Neddylation"/>
</dbReference>
<dbReference type="PRO" id="PR:O14399"/>
<dbReference type="Proteomes" id="UP000002485">
    <property type="component" value="Chromosome II"/>
</dbReference>
<dbReference type="GO" id="GO:0005737">
    <property type="term" value="C:cytoplasm"/>
    <property type="evidence" value="ECO:0000318"/>
    <property type="project" value="GO_Central"/>
</dbReference>
<dbReference type="GO" id="GO:0005829">
    <property type="term" value="C:cytosol"/>
    <property type="evidence" value="ECO:0007005"/>
    <property type="project" value="PomBase"/>
</dbReference>
<dbReference type="GO" id="GO:0005634">
    <property type="term" value="C:nucleus"/>
    <property type="evidence" value="ECO:0007005"/>
    <property type="project" value="PomBase"/>
</dbReference>
<dbReference type="GO" id="GO:0019005">
    <property type="term" value="C:SCF ubiquitin ligase complex"/>
    <property type="evidence" value="ECO:0000314"/>
    <property type="project" value="PomBase"/>
</dbReference>
<dbReference type="GO" id="GO:0031386">
    <property type="term" value="F:protein tag activity"/>
    <property type="evidence" value="ECO:0000314"/>
    <property type="project" value="PomBase"/>
</dbReference>
<dbReference type="GO" id="GO:0031625">
    <property type="term" value="F:ubiquitin protein ligase binding"/>
    <property type="evidence" value="ECO:0000318"/>
    <property type="project" value="GO_Central"/>
</dbReference>
<dbReference type="GO" id="GO:0019941">
    <property type="term" value="P:modification-dependent protein catabolic process"/>
    <property type="evidence" value="ECO:0000318"/>
    <property type="project" value="GO_Central"/>
</dbReference>
<dbReference type="GO" id="GO:0045116">
    <property type="term" value="P:protein neddylation"/>
    <property type="evidence" value="ECO:0000316"/>
    <property type="project" value="PomBase"/>
</dbReference>
<dbReference type="GO" id="GO:0030162">
    <property type="term" value="P:regulation of proteolysis"/>
    <property type="evidence" value="ECO:0000318"/>
    <property type="project" value="GO_Central"/>
</dbReference>
<dbReference type="CDD" id="cd01806">
    <property type="entry name" value="Ubl_NEDD8"/>
    <property type="match status" value="1"/>
</dbReference>
<dbReference type="FunFam" id="3.10.20.90:FF:000023">
    <property type="entry name" value="NEDD8 protein"/>
    <property type="match status" value="1"/>
</dbReference>
<dbReference type="Gene3D" id="3.10.20.90">
    <property type="entry name" value="Phosphatidylinositol 3-kinase Catalytic Subunit, Chain A, domain 1"/>
    <property type="match status" value="1"/>
</dbReference>
<dbReference type="InterPro" id="IPR038738">
    <property type="entry name" value="Nedd8-like"/>
</dbReference>
<dbReference type="InterPro" id="IPR000626">
    <property type="entry name" value="Ubiquitin-like_dom"/>
</dbReference>
<dbReference type="InterPro" id="IPR029071">
    <property type="entry name" value="Ubiquitin-like_domsf"/>
</dbReference>
<dbReference type="InterPro" id="IPR019954">
    <property type="entry name" value="Ubiquitin_CS"/>
</dbReference>
<dbReference type="InterPro" id="IPR019956">
    <property type="entry name" value="Ubiquitin_dom"/>
</dbReference>
<dbReference type="InterPro" id="IPR050158">
    <property type="entry name" value="Ubiquitin_ubiquitin-like"/>
</dbReference>
<dbReference type="PANTHER" id="PTHR10666">
    <property type="entry name" value="UBIQUITIN"/>
    <property type="match status" value="1"/>
</dbReference>
<dbReference type="Pfam" id="PF00240">
    <property type="entry name" value="ubiquitin"/>
    <property type="match status" value="1"/>
</dbReference>
<dbReference type="PRINTS" id="PR00348">
    <property type="entry name" value="UBIQUITIN"/>
</dbReference>
<dbReference type="SMART" id="SM00213">
    <property type="entry name" value="UBQ"/>
    <property type="match status" value="1"/>
</dbReference>
<dbReference type="SUPFAM" id="SSF54236">
    <property type="entry name" value="Ubiquitin-like"/>
    <property type="match status" value="1"/>
</dbReference>
<dbReference type="PROSITE" id="PS00299">
    <property type="entry name" value="UBIQUITIN_1"/>
    <property type="match status" value="1"/>
</dbReference>
<dbReference type="PROSITE" id="PS50053">
    <property type="entry name" value="UBIQUITIN_2"/>
    <property type="match status" value="1"/>
</dbReference>
<comment type="similarity">
    <text evidence="1">Belongs to the ubiquitin family.</text>
</comment>
<proteinExistence type="inferred from homology"/>
<gene>
    <name type="primary">ubl1</name>
    <name type="synonym">ned8</name>
    <name type="ORF">SPBC12D12.08c</name>
    <name type="ORF">SPBC24C6.01c</name>
</gene>
<accession>O14399</accession>
<evidence type="ECO:0000305" key="1"/>
<sequence>MLIKVKTLTGKEIELDIDPNDKVSRIKERVEEKEGIPPSQQRLIYAGKQMADDKNAESYHLEGGSVLHLVLALRGGSC</sequence>
<name>UBL1_SCHPO</name>
<organism>
    <name type="scientific">Schizosaccharomyces pombe (strain 972 / ATCC 24843)</name>
    <name type="common">Fission yeast</name>
    <dbReference type="NCBI Taxonomy" id="284812"/>
    <lineage>
        <taxon>Eukaryota</taxon>
        <taxon>Fungi</taxon>
        <taxon>Dikarya</taxon>
        <taxon>Ascomycota</taxon>
        <taxon>Taphrinomycotina</taxon>
        <taxon>Schizosaccharomycetes</taxon>
        <taxon>Schizosaccharomycetales</taxon>
        <taxon>Schizosaccharomycetaceae</taxon>
        <taxon>Schizosaccharomyces</taxon>
    </lineage>
</organism>
<reference key="1">
    <citation type="submission" date="1997-10" db="EMBL/GenBank/DDBJ databases">
        <title>Ubl1, a ubiquitin-like protein, induced by stress.</title>
        <authorList>
            <person name="Lenaers G."/>
            <person name="Perret E."/>
            <person name="Kaghad M."/>
            <person name="Picard A."/>
            <person name="Caput D."/>
        </authorList>
    </citation>
    <scope>NUCLEOTIDE SEQUENCE [MRNA]</scope>
    <source>
        <strain>972 / ATCC 24843</strain>
    </source>
</reference>
<reference key="2">
    <citation type="journal article" date="2000" name="Yeast">
        <title>Analysis of 114 kb of DNA sequence from fission yeast chromosome 2 immediately centromere-distal to his5.</title>
        <authorList>
            <person name="Xiang Z."/>
            <person name="Moore K."/>
            <person name="Wood V."/>
            <person name="Rajandream M.A."/>
            <person name="Barrell B.G."/>
            <person name="Skelton J."/>
            <person name="Churcher C.M."/>
            <person name="Lyne M.H."/>
            <person name="Devlin K."/>
            <person name="Gwilliam R."/>
            <person name="Rutherford K.M."/>
            <person name="Aves S.J."/>
        </authorList>
    </citation>
    <scope>NUCLEOTIDE SEQUENCE [GENOMIC DNA]</scope>
</reference>
<reference key="3">
    <citation type="journal article" date="2002" name="Nature">
        <title>The genome sequence of Schizosaccharomyces pombe.</title>
        <authorList>
            <person name="Wood V."/>
            <person name="Gwilliam R."/>
            <person name="Rajandream M.A."/>
            <person name="Lyne M.H."/>
            <person name="Lyne R."/>
            <person name="Stewart A."/>
            <person name="Sgouros J.G."/>
            <person name="Peat N."/>
            <person name="Hayles J."/>
            <person name="Baker S.G."/>
            <person name="Basham D."/>
            <person name="Bowman S."/>
            <person name="Brooks K."/>
            <person name="Brown D."/>
            <person name="Brown S."/>
            <person name="Chillingworth T."/>
            <person name="Churcher C.M."/>
            <person name="Collins M."/>
            <person name="Connor R."/>
            <person name="Cronin A."/>
            <person name="Davis P."/>
            <person name="Feltwell T."/>
            <person name="Fraser A."/>
            <person name="Gentles S."/>
            <person name="Goble A."/>
            <person name="Hamlin N."/>
            <person name="Harris D.E."/>
            <person name="Hidalgo J."/>
            <person name="Hodgson G."/>
            <person name="Holroyd S."/>
            <person name="Hornsby T."/>
            <person name="Howarth S."/>
            <person name="Huckle E.J."/>
            <person name="Hunt S."/>
            <person name="Jagels K."/>
            <person name="James K.D."/>
            <person name="Jones L."/>
            <person name="Jones M."/>
            <person name="Leather S."/>
            <person name="McDonald S."/>
            <person name="McLean J."/>
            <person name="Mooney P."/>
            <person name="Moule S."/>
            <person name="Mungall K.L."/>
            <person name="Murphy L.D."/>
            <person name="Niblett D."/>
            <person name="Odell C."/>
            <person name="Oliver K."/>
            <person name="O'Neil S."/>
            <person name="Pearson D."/>
            <person name="Quail M.A."/>
            <person name="Rabbinowitsch E."/>
            <person name="Rutherford K.M."/>
            <person name="Rutter S."/>
            <person name="Saunders D."/>
            <person name="Seeger K."/>
            <person name="Sharp S."/>
            <person name="Skelton J."/>
            <person name="Simmonds M.N."/>
            <person name="Squares R."/>
            <person name="Squares S."/>
            <person name="Stevens K."/>
            <person name="Taylor K."/>
            <person name="Taylor R.G."/>
            <person name="Tivey A."/>
            <person name="Walsh S.V."/>
            <person name="Warren T."/>
            <person name="Whitehead S."/>
            <person name="Woodward J.R."/>
            <person name="Volckaert G."/>
            <person name="Aert R."/>
            <person name="Robben J."/>
            <person name="Grymonprez B."/>
            <person name="Weltjens I."/>
            <person name="Vanstreels E."/>
            <person name="Rieger M."/>
            <person name="Schaefer M."/>
            <person name="Mueller-Auer S."/>
            <person name="Gabel C."/>
            <person name="Fuchs M."/>
            <person name="Duesterhoeft A."/>
            <person name="Fritzc C."/>
            <person name="Holzer E."/>
            <person name="Moestl D."/>
            <person name="Hilbert H."/>
            <person name="Borzym K."/>
            <person name="Langer I."/>
            <person name="Beck A."/>
            <person name="Lehrach H."/>
            <person name="Reinhardt R."/>
            <person name="Pohl T.M."/>
            <person name="Eger P."/>
            <person name="Zimmermann W."/>
            <person name="Wedler H."/>
            <person name="Wambutt R."/>
            <person name="Purnelle B."/>
            <person name="Goffeau A."/>
            <person name="Cadieu E."/>
            <person name="Dreano S."/>
            <person name="Gloux S."/>
            <person name="Lelaure V."/>
            <person name="Mottier S."/>
            <person name="Galibert F."/>
            <person name="Aves S.J."/>
            <person name="Xiang Z."/>
            <person name="Hunt C."/>
            <person name="Moore K."/>
            <person name="Hurst S.M."/>
            <person name="Lucas M."/>
            <person name="Rochet M."/>
            <person name="Gaillardin C."/>
            <person name="Tallada V.A."/>
            <person name="Garzon A."/>
            <person name="Thode G."/>
            <person name="Daga R.R."/>
            <person name="Cruzado L."/>
            <person name="Jimenez J."/>
            <person name="Sanchez M."/>
            <person name="del Rey F."/>
            <person name="Benito J."/>
            <person name="Dominguez A."/>
            <person name="Revuelta J.L."/>
            <person name="Moreno S."/>
            <person name="Armstrong J."/>
            <person name="Forsburg S.L."/>
            <person name="Cerutti L."/>
            <person name="Lowe T."/>
            <person name="McCombie W.R."/>
            <person name="Paulsen I."/>
            <person name="Potashkin J."/>
            <person name="Shpakovski G.V."/>
            <person name="Ussery D."/>
            <person name="Barrell B.G."/>
            <person name="Nurse P."/>
        </authorList>
    </citation>
    <scope>NUCLEOTIDE SEQUENCE [LARGE SCALE GENOMIC DNA]</scope>
    <source>
        <strain>972 / ATCC 24843</strain>
    </source>
</reference>
<protein>
    <recommendedName>
        <fullName>Ubiquitin-like protein 1</fullName>
    </recommendedName>
</protein>
<feature type="chain" id="PRO_0000114889" description="Ubiquitin-like protein 1">
    <location>
        <begin position="1"/>
        <end position="78"/>
    </location>
</feature>
<keyword id="KW-1185">Reference proteome</keyword>
<keyword id="KW-0833">Ubl conjugation pathway</keyword>